<name>SRRB_STAAU</name>
<gene>
    <name type="primary">srrB</name>
</gene>
<dbReference type="EC" id="2.7.13.3"/>
<dbReference type="EMBL" id="AF260326">
    <property type="protein sequence ID" value="AAF70313.1"/>
    <property type="molecule type" value="Genomic_DNA"/>
</dbReference>
<dbReference type="RefSeq" id="WP_043054894.1">
    <property type="nucleotide sequence ID" value="NZ_BAABRD010000003.1"/>
</dbReference>
<dbReference type="PDB" id="6PAJ">
    <property type="method" value="X-ray"/>
    <property type="resolution" value="2.00 A"/>
    <property type="chains" value="A/B=355-583"/>
</dbReference>
<dbReference type="PDB" id="7JL6">
    <property type="method" value="X-ray"/>
    <property type="resolution" value="2.10 A"/>
    <property type="chains" value="A/B=258-358"/>
</dbReference>
<dbReference type="PDBsum" id="6PAJ"/>
<dbReference type="PDBsum" id="7JL6"/>
<dbReference type="SMR" id="Q9L523"/>
<dbReference type="GO" id="GO:0005886">
    <property type="term" value="C:plasma membrane"/>
    <property type="evidence" value="ECO:0007669"/>
    <property type="project" value="UniProtKB-SubCell"/>
</dbReference>
<dbReference type="GO" id="GO:0005524">
    <property type="term" value="F:ATP binding"/>
    <property type="evidence" value="ECO:0007669"/>
    <property type="project" value="UniProtKB-KW"/>
</dbReference>
<dbReference type="GO" id="GO:0000156">
    <property type="term" value="F:phosphorelay response regulator activity"/>
    <property type="evidence" value="ECO:0007669"/>
    <property type="project" value="TreeGrafter"/>
</dbReference>
<dbReference type="GO" id="GO:0000155">
    <property type="term" value="F:phosphorelay sensor kinase activity"/>
    <property type="evidence" value="ECO:0007669"/>
    <property type="project" value="InterPro"/>
</dbReference>
<dbReference type="GO" id="GO:0030295">
    <property type="term" value="F:protein kinase activator activity"/>
    <property type="evidence" value="ECO:0007669"/>
    <property type="project" value="TreeGrafter"/>
</dbReference>
<dbReference type="GO" id="GO:0007234">
    <property type="term" value="P:osmosensory signaling via phosphorelay pathway"/>
    <property type="evidence" value="ECO:0007669"/>
    <property type="project" value="TreeGrafter"/>
</dbReference>
<dbReference type="CDD" id="cd06225">
    <property type="entry name" value="HAMP"/>
    <property type="match status" value="1"/>
</dbReference>
<dbReference type="CDD" id="cd00075">
    <property type="entry name" value="HATPase"/>
    <property type="match status" value="1"/>
</dbReference>
<dbReference type="CDD" id="cd00082">
    <property type="entry name" value="HisKA"/>
    <property type="match status" value="1"/>
</dbReference>
<dbReference type="FunFam" id="3.30.565.10:FF:000006">
    <property type="entry name" value="Sensor histidine kinase WalK"/>
    <property type="match status" value="1"/>
</dbReference>
<dbReference type="FunFam" id="1.10.287.130:FF:000001">
    <property type="entry name" value="Two-component sensor histidine kinase"/>
    <property type="match status" value="1"/>
</dbReference>
<dbReference type="Gene3D" id="1.10.287.130">
    <property type="match status" value="1"/>
</dbReference>
<dbReference type="Gene3D" id="6.10.340.10">
    <property type="match status" value="1"/>
</dbReference>
<dbReference type="Gene3D" id="3.30.565.10">
    <property type="entry name" value="Histidine kinase-like ATPase, C-terminal domain"/>
    <property type="match status" value="1"/>
</dbReference>
<dbReference type="InterPro" id="IPR003660">
    <property type="entry name" value="HAMP_dom"/>
</dbReference>
<dbReference type="InterPro" id="IPR036890">
    <property type="entry name" value="HATPase_C_sf"/>
</dbReference>
<dbReference type="InterPro" id="IPR005467">
    <property type="entry name" value="His_kinase_dom"/>
</dbReference>
<dbReference type="InterPro" id="IPR003661">
    <property type="entry name" value="HisK_dim/P_dom"/>
</dbReference>
<dbReference type="InterPro" id="IPR036097">
    <property type="entry name" value="HisK_dim/P_sf"/>
</dbReference>
<dbReference type="InterPro" id="IPR041328">
    <property type="entry name" value="HisK_sensor"/>
</dbReference>
<dbReference type="InterPro" id="IPR052545">
    <property type="entry name" value="Light-responsive_reg"/>
</dbReference>
<dbReference type="InterPro" id="IPR004358">
    <property type="entry name" value="Sig_transdc_His_kin-like_C"/>
</dbReference>
<dbReference type="PANTHER" id="PTHR42878:SF3">
    <property type="entry name" value="HISTIDINE PROTEIN KINASE SAES"/>
    <property type="match status" value="1"/>
</dbReference>
<dbReference type="PANTHER" id="PTHR42878">
    <property type="entry name" value="TWO-COMPONENT HISTIDINE KINASE"/>
    <property type="match status" value="1"/>
</dbReference>
<dbReference type="Pfam" id="PF00672">
    <property type="entry name" value="HAMP"/>
    <property type="match status" value="1"/>
</dbReference>
<dbReference type="Pfam" id="PF02518">
    <property type="entry name" value="HATPase_c"/>
    <property type="match status" value="1"/>
</dbReference>
<dbReference type="Pfam" id="PF18698">
    <property type="entry name" value="HisK_sensor"/>
    <property type="match status" value="1"/>
</dbReference>
<dbReference type="Pfam" id="PF00512">
    <property type="entry name" value="HisKA"/>
    <property type="match status" value="1"/>
</dbReference>
<dbReference type="PRINTS" id="PR00344">
    <property type="entry name" value="BCTRLSENSOR"/>
</dbReference>
<dbReference type="SMART" id="SM00304">
    <property type="entry name" value="HAMP"/>
    <property type="match status" value="1"/>
</dbReference>
<dbReference type="SMART" id="SM00387">
    <property type="entry name" value="HATPase_c"/>
    <property type="match status" value="1"/>
</dbReference>
<dbReference type="SMART" id="SM00388">
    <property type="entry name" value="HisKA"/>
    <property type="match status" value="1"/>
</dbReference>
<dbReference type="SUPFAM" id="SSF55874">
    <property type="entry name" value="ATPase domain of HSP90 chaperone/DNA topoisomerase II/histidine kinase"/>
    <property type="match status" value="1"/>
</dbReference>
<dbReference type="SUPFAM" id="SSF158472">
    <property type="entry name" value="HAMP domain-like"/>
    <property type="match status" value="1"/>
</dbReference>
<dbReference type="SUPFAM" id="SSF47384">
    <property type="entry name" value="Homodimeric domain of signal transducing histidine kinase"/>
    <property type="match status" value="1"/>
</dbReference>
<dbReference type="PROSITE" id="PS50885">
    <property type="entry name" value="HAMP"/>
    <property type="match status" value="1"/>
</dbReference>
<dbReference type="PROSITE" id="PS50109">
    <property type="entry name" value="HIS_KIN"/>
    <property type="match status" value="1"/>
</dbReference>
<proteinExistence type="evidence at protein level"/>
<sequence>MMSRLNSVVIKLWLTIILIVTTVLILLSIALITFMQYYFTQETENAIREDARRISSLVEQSHNKEEAIKYSQTLIENPGGLMIINNKHRQSTASLSNIKKQMLNEVVNNDHFDDVFDKGKSVTRNVTIKEKGSSQTYILLGYPTKAQKNSHSKYSGVFIYKDLKSIEDTNNAITIITIITAVIFLTITTVFAFFLSSRITKPLRRLRDQATRVSEGDYSYKPSVTTKDEIGQLSQAFNQMSTEIEEHVDALSTSKNIRDSLINSMVEGVLGINESRQIILSNKMANDIMDNIDEDAKAFLLRQIEDTFKSKQTEMRDLEMNTRFFVVTTSYIDKIEQGGKSGVVVTVRDMTNEHNLDQMKKDFIANVSHELRTPISLLQGYTESIVDGIVTEPDEIKESLAIVLDESKRLNRLVNELLNVARMDAEGLSVNKEVQPIAALLDKMKIKYRQQADDLGLNMTFNYCKKRVWSYDMDRMDQVLTNLIDNASRYTKPGDEIAITCDENESEDILYIKDTGTGIAPEHLQQVFDRFYKVDAARTRGKQGTGLGLFICKMIIEEHGGSIDVKSELGKGTTFIIKLPKPE</sequence>
<evidence type="ECO:0000250" key="1">
    <source>
        <dbReference type="UniProtKB" id="Q5HFT1"/>
    </source>
</evidence>
<evidence type="ECO:0000255" key="2"/>
<evidence type="ECO:0000255" key="3">
    <source>
        <dbReference type="PROSITE-ProRule" id="PRU00102"/>
    </source>
</evidence>
<evidence type="ECO:0000255" key="4">
    <source>
        <dbReference type="PROSITE-ProRule" id="PRU00107"/>
    </source>
</evidence>
<evidence type="ECO:0000269" key="5">
    <source>
    </source>
</evidence>
<evidence type="ECO:0000269" key="6">
    <source>
    </source>
</evidence>
<evidence type="ECO:0007829" key="7">
    <source>
        <dbReference type="PDB" id="6PAJ"/>
    </source>
</evidence>
<evidence type="ECO:0007829" key="8">
    <source>
        <dbReference type="PDB" id="7JL6"/>
    </source>
</evidence>
<accession>Q9L523</accession>
<accession>Q6XZ98</accession>
<comment type="function">
    <text evidence="1">Member of the two-component regulatory system SrrA/SrrB, which is involved in the global regulation of staphylococcal virulence factors in response to environmental oxygen levels as well as biofilm formation. Also plays an essential role in host-derived nitric oxide resistance by regulating hmp/flavohemoglobin, an enzyme that detoxifies nitric oxide by converting it to nitrate. Functions as a sensor protein kinase which is autophosphorylated at a histidine residue and transfers its phosphate group to SrrA. In turn, SrrA binds to the upstream promoter regions of the target genes to positively and negatively regulate their expression.</text>
</comment>
<comment type="catalytic activity">
    <reaction>
        <text>ATP + protein L-histidine = ADP + protein N-phospho-L-histidine.</text>
        <dbReference type="EC" id="2.7.13.3"/>
    </reaction>
</comment>
<comment type="subcellular location">
    <subcellularLocation>
        <location evidence="6">Cell membrane</location>
        <topology evidence="6">Multi-pass membrane protein</topology>
    </subcellularLocation>
</comment>
<comment type="induction">
    <text evidence="5">Activated by SrrA. Expression is maximal during the postexponential phase of growth, particularly under microaerobic conditions.</text>
</comment>
<keyword id="KW-0002">3D-structure</keyword>
<keyword id="KW-0067">ATP-binding</keyword>
<keyword id="KW-1003">Cell membrane</keyword>
<keyword id="KW-0418">Kinase</keyword>
<keyword id="KW-0472">Membrane</keyword>
<keyword id="KW-0547">Nucleotide-binding</keyword>
<keyword id="KW-0597">Phosphoprotein</keyword>
<keyword id="KW-0808">Transferase</keyword>
<keyword id="KW-0812">Transmembrane</keyword>
<keyword id="KW-1133">Transmembrane helix</keyword>
<keyword id="KW-0902">Two-component regulatory system</keyword>
<feature type="chain" id="PRO_0000074881" description="Sensor protein SrrB">
    <location>
        <begin position="1"/>
        <end position="583"/>
    </location>
</feature>
<feature type="topological domain" description="Cytoplasmic" evidence="2">
    <location>
        <begin position="1"/>
        <end position="11"/>
    </location>
</feature>
<feature type="transmembrane region" description="Helical" evidence="2">
    <location>
        <begin position="12"/>
        <end position="32"/>
    </location>
</feature>
<feature type="topological domain" description="Extracellular" evidence="2">
    <location>
        <begin position="33"/>
        <end position="174"/>
    </location>
</feature>
<feature type="transmembrane region" description="Helical" evidence="2">
    <location>
        <begin position="175"/>
        <end position="195"/>
    </location>
</feature>
<feature type="topological domain" description="Cytoplasmic" evidence="2">
    <location>
        <begin position="196"/>
        <end position="583"/>
    </location>
</feature>
<feature type="domain" description="HAMP" evidence="3">
    <location>
        <begin position="197"/>
        <end position="249"/>
    </location>
</feature>
<feature type="domain" description="Histidine kinase" evidence="4">
    <location>
        <begin position="366"/>
        <end position="583"/>
    </location>
</feature>
<feature type="modified residue" description="Phosphohistidine; by autocatalysis" evidence="4">
    <location>
        <position position="369"/>
    </location>
</feature>
<feature type="turn" evidence="8">
    <location>
        <begin position="258"/>
        <end position="261"/>
    </location>
</feature>
<feature type="strand" evidence="8">
    <location>
        <begin position="268"/>
        <end position="273"/>
    </location>
</feature>
<feature type="strand" evidence="8">
    <location>
        <begin position="278"/>
        <end position="281"/>
    </location>
</feature>
<feature type="helix" evidence="8">
    <location>
        <begin position="283"/>
        <end position="290"/>
    </location>
</feature>
<feature type="helix" evidence="8">
    <location>
        <begin position="294"/>
        <end position="310"/>
    </location>
</feature>
<feature type="strand" evidence="8">
    <location>
        <begin position="314"/>
        <end position="320"/>
    </location>
</feature>
<feature type="strand" evidence="8">
    <location>
        <begin position="323"/>
        <end position="333"/>
    </location>
</feature>
<feature type="strand" evidence="8">
    <location>
        <begin position="342"/>
        <end position="349"/>
    </location>
</feature>
<feature type="helix" evidence="8">
    <location>
        <begin position="350"/>
        <end position="353"/>
    </location>
</feature>
<feature type="helix" evidence="7">
    <location>
        <begin position="357"/>
        <end position="386"/>
    </location>
</feature>
<feature type="helix" evidence="7">
    <location>
        <begin position="393"/>
        <end position="425"/>
    </location>
</feature>
<feature type="turn" evidence="7">
    <location>
        <begin position="426"/>
        <end position="428"/>
    </location>
</feature>
<feature type="strand" evidence="7">
    <location>
        <begin position="433"/>
        <end position="437"/>
    </location>
</feature>
<feature type="helix" evidence="7">
    <location>
        <begin position="438"/>
        <end position="447"/>
    </location>
</feature>
<feature type="helix" evidence="7">
    <location>
        <begin position="449"/>
        <end position="454"/>
    </location>
</feature>
<feature type="strand" evidence="7">
    <location>
        <begin position="458"/>
        <end position="461"/>
    </location>
</feature>
<feature type="strand" evidence="7">
    <location>
        <begin position="468"/>
        <end position="471"/>
    </location>
</feature>
<feature type="helix" evidence="7">
    <location>
        <begin position="473"/>
        <end position="488"/>
    </location>
</feature>
<feature type="strand" evidence="7">
    <location>
        <begin position="496"/>
        <end position="503"/>
    </location>
</feature>
<feature type="strand" evidence="7">
    <location>
        <begin position="505"/>
        <end position="514"/>
    </location>
</feature>
<feature type="helix" evidence="7">
    <location>
        <begin position="547"/>
        <end position="556"/>
    </location>
</feature>
<feature type="strand" evidence="7">
    <location>
        <begin position="562"/>
        <end position="568"/>
    </location>
</feature>
<feature type="turn" evidence="7">
    <location>
        <begin position="569"/>
        <end position="571"/>
    </location>
</feature>
<feature type="strand" evidence="7">
    <location>
        <begin position="572"/>
        <end position="580"/>
    </location>
</feature>
<reference key="1">
    <citation type="journal article" date="2001" name="J. Bacteriol.">
        <title>Identification of a novel two-component regulatory system that acts in global regulation of virulence factors of Staphylococcus aureus.</title>
        <authorList>
            <person name="Yarwood J.M."/>
            <person name="McCormick J.K."/>
            <person name="Schlievert P.M."/>
        </authorList>
    </citation>
    <scope>NUCLEOTIDE SEQUENCE [GENOMIC DNA]</scope>
    <scope>FUNCTION</scope>
    <scope>INDUCTION</scope>
    <source>
        <strain>MN8</strain>
    </source>
</reference>
<reference key="2">
    <citation type="journal article" date="2004" name="J. Bacteriol.">
        <title>Characterization of virulence factor regulation by SrrAB, a two-component system in Staphylococcus aureus.</title>
        <authorList>
            <person name="Pragman A.A."/>
            <person name="Yarwood J.M."/>
            <person name="Tripp T.J."/>
            <person name="Schlievert P.M."/>
        </authorList>
    </citation>
    <scope>SUBCELLULAR LOCATION</scope>
    <source>
        <strain>MN8</strain>
    </source>
</reference>
<organism>
    <name type="scientific">Staphylococcus aureus</name>
    <dbReference type="NCBI Taxonomy" id="1280"/>
    <lineage>
        <taxon>Bacteria</taxon>
        <taxon>Bacillati</taxon>
        <taxon>Bacillota</taxon>
        <taxon>Bacilli</taxon>
        <taxon>Bacillales</taxon>
        <taxon>Staphylococcaceae</taxon>
        <taxon>Staphylococcus</taxon>
    </lineage>
</organism>
<protein>
    <recommendedName>
        <fullName>Sensor protein SrrB</fullName>
        <ecNumber>2.7.13.3</ecNumber>
    </recommendedName>
    <alternativeName>
        <fullName>Staphylococcal respiratory response protein B</fullName>
    </alternativeName>
</protein>